<comment type="function">
    <text evidence="1">Single strand-specific metallo-endoribonuclease involved in late-stage 70S ribosome quality control and in maturation of the 3' terminus of the 16S rRNA.</text>
</comment>
<comment type="cofactor">
    <cofactor evidence="1">
        <name>Zn(2+)</name>
        <dbReference type="ChEBI" id="CHEBI:29105"/>
    </cofactor>
    <text evidence="1">Binds 1 zinc ion.</text>
</comment>
<comment type="subcellular location">
    <subcellularLocation>
        <location evidence="1">Cytoplasm</location>
    </subcellularLocation>
</comment>
<comment type="similarity">
    <text evidence="1">Belongs to the endoribonuclease YbeY family.</text>
</comment>
<accession>B5YQL0</accession>
<proteinExistence type="inferred from homology"/>
<dbReference type="EC" id="3.1.-.-" evidence="1"/>
<dbReference type="EMBL" id="CP001164">
    <property type="protein sequence ID" value="ACI36239.1"/>
    <property type="molecule type" value="Genomic_DNA"/>
</dbReference>
<dbReference type="RefSeq" id="WP_000084465.1">
    <property type="nucleotide sequence ID" value="NC_011353.1"/>
</dbReference>
<dbReference type="SMR" id="B5YQL0"/>
<dbReference type="KEGG" id="ecf:ECH74115_0752"/>
<dbReference type="HOGENOM" id="CLU_106710_0_1_6"/>
<dbReference type="GO" id="GO:0005737">
    <property type="term" value="C:cytoplasm"/>
    <property type="evidence" value="ECO:0007669"/>
    <property type="project" value="UniProtKB-SubCell"/>
</dbReference>
<dbReference type="GO" id="GO:0004222">
    <property type="term" value="F:metalloendopeptidase activity"/>
    <property type="evidence" value="ECO:0007669"/>
    <property type="project" value="InterPro"/>
</dbReference>
<dbReference type="GO" id="GO:0004521">
    <property type="term" value="F:RNA endonuclease activity"/>
    <property type="evidence" value="ECO:0007669"/>
    <property type="project" value="UniProtKB-UniRule"/>
</dbReference>
<dbReference type="GO" id="GO:0008270">
    <property type="term" value="F:zinc ion binding"/>
    <property type="evidence" value="ECO:0007669"/>
    <property type="project" value="UniProtKB-UniRule"/>
</dbReference>
<dbReference type="GO" id="GO:0006364">
    <property type="term" value="P:rRNA processing"/>
    <property type="evidence" value="ECO:0007669"/>
    <property type="project" value="UniProtKB-UniRule"/>
</dbReference>
<dbReference type="FunFam" id="3.40.390.30:FF:000001">
    <property type="entry name" value="Endoribonuclease YbeY"/>
    <property type="match status" value="1"/>
</dbReference>
<dbReference type="Gene3D" id="3.40.390.30">
    <property type="entry name" value="Metalloproteases ('zincins'), catalytic domain"/>
    <property type="match status" value="1"/>
</dbReference>
<dbReference type="HAMAP" id="MF_00009">
    <property type="entry name" value="Endoribonucl_YbeY"/>
    <property type="match status" value="1"/>
</dbReference>
<dbReference type="InterPro" id="IPR023091">
    <property type="entry name" value="MetalPrtase_cat_dom_sf_prd"/>
</dbReference>
<dbReference type="InterPro" id="IPR002036">
    <property type="entry name" value="YbeY"/>
</dbReference>
<dbReference type="InterPro" id="IPR020549">
    <property type="entry name" value="YbeY_CS"/>
</dbReference>
<dbReference type="NCBIfam" id="TIGR00043">
    <property type="entry name" value="rRNA maturation RNase YbeY"/>
    <property type="match status" value="1"/>
</dbReference>
<dbReference type="PANTHER" id="PTHR46986">
    <property type="entry name" value="ENDORIBONUCLEASE YBEY, CHLOROPLASTIC"/>
    <property type="match status" value="1"/>
</dbReference>
<dbReference type="PANTHER" id="PTHR46986:SF1">
    <property type="entry name" value="ENDORIBONUCLEASE YBEY, CHLOROPLASTIC"/>
    <property type="match status" value="1"/>
</dbReference>
<dbReference type="Pfam" id="PF02130">
    <property type="entry name" value="YbeY"/>
    <property type="match status" value="1"/>
</dbReference>
<dbReference type="SUPFAM" id="SSF55486">
    <property type="entry name" value="Metalloproteases ('zincins'), catalytic domain"/>
    <property type="match status" value="1"/>
</dbReference>
<dbReference type="PROSITE" id="PS01306">
    <property type="entry name" value="UPF0054"/>
    <property type="match status" value="1"/>
</dbReference>
<gene>
    <name evidence="1" type="primary">ybeY</name>
    <name type="ordered locus">ECH74115_0752</name>
</gene>
<reference key="1">
    <citation type="journal article" date="2011" name="Proc. Natl. Acad. Sci. U.S.A.">
        <title>Genomic anatomy of Escherichia coli O157:H7 outbreaks.</title>
        <authorList>
            <person name="Eppinger M."/>
            <person name="Mammel M.K."/>
            <person name="Leclerc J.E."/>
            <person name="Ravel J."/>
            <person name="Cebula T.A."/>
        </authorList>
    </citation>
    <scope>NUCLEOTIDE SEQUENCE [LARGE SCALE GENOMIC DNA]</scope>
    <source>
        <strain>EC4115 / EHEC</strain>
    </source>
</reference>
<feature type="chain" id="PRO_1000089172" description="Endoribonuclease YbeY">
    <location>
        <begin position="1"/>
        <end position="155"/>
    </location>
</feature>
<feature type="binding site" evidence="1">
    <location>
        <position position="114"/>
    </location>
    <ligand>
        <name>Zn(2+)</name>
        <dbReference type="ChEBI" id="CHEBI:29105"/>
        <note>catalytic</note>
    </ligand>
</feature>
<feature type="binding site" evidence="1">
    <location>
        <position position="118"/>
    </location>
    <ligand>
        <name>Zn(2+)</name>
        <dbReference type="ChEBI" id="CHEBI:29105"/>
        <note>catalytic</note>
    </ligand>
</feature>
<feature type="binding site" evidence="1">
    <location>
        <position position="124"/>
    </location>
    <ligand>
        <name>Zn(2+)</name>
        <dbReference type="ChEBI" id="CHEBI:29105"/>
        <note>catalytic</note>
    </ligand>
</feature>
<evidence type="ECO:0000255" key="1">
    <source>
        <dbReference type="HAMAP-Rule" id="MF_00009"/>
    </source>
</evidence>
<keyword id="KW-0963">Cytoplasm</keyword>
<keyword id="KW-0255">Endonuclease</keyword>
<keyword id="KW-0378">Hydrolase</keyword>
<keyword id="KW-0479">Metal-binding</keyword>
<keyword id="KW-0540">Nuclease</keyword>
<keyword id="KW-0690">Ribosome biogenesis</keyword>
<keyword id="KW-0698">rRNA processing</keyword>
<keyword id="KW-0862">Zinc</keyword>
<organism>
    <name type="scientific">Escherichia coli O157:H7 (strain EC4115 / EHEC)</name>
    <dbReference type="NCBI Taxonomy" id="444450"/>
    <lineage>
        <taxon>Bacteria</taxon>
        <taxon>Pseudomonadati</taxon>
        <taxon>Pseudomonadota</taxon>
        <taxon>Gammaproteobacteria</taxon>
        <taxon>Enterobacterales</taxon>
        <taxon>Enterobacteriaceae</taxon>
        <taxon>Escherichia</taxon>
    </lineage>
</organism>
<protein>
    <recommendedName>
        <fullName evidence="1">Endoribonuclease YbeY</fullName>
        <ecNumber evidence="1">3.1.-.-</ecNumber>
    </recommendedName>
</protein>
<sequence length="155" mass="17558">MSQVILDLQLACEDNSGLPEESQFQTWLNAVIPQFQEESEVTIRVVDTAESHSLNLTYRGKDKPTNVLSFPFEVPPGMEMSLLGDLVICRQMVEKEAQEQGKPLEAHWAHMVVHGSLHLLGYDHIEDDEAEEMEALETEIMLALGYEDPYIAEKE</sequence>
<name>YBEY_ECO5E</name>